<comment type="function">
    <text evidence="1">A site-2 regulated intramembrane protease (S2P) that cleaves the peptide bond between 'Ala-108' and 'Cys-109' in the transmembrane region of RseA. Part of a regulated intramembrane proteolysis (RIP) cascade. Acts on DegS-cleaved RseA to release the cytoplasmic domain of RseA. This provides the cell with sigma-E (RpoE) activity through the proteolysis of RseA (By similarity).</text>
</comment>
<comment type="cofactor">
    <cofactor evidence="1">
        <name>Zn(2+)</name>
        <dbReference type="ChEBI" id="CHEBI:29105"/>
    </cofactor>
</comment>
<comment type="subunit">
    <text evidence="1">Interacts with RseA.</text>
</comment>
<comment type="subcellular location">
    <subcellularLocation>
        <location evidence="1">Cell inner membrane</location>
        <topology evidence="1">Multi-pass membrane protein</topology>
    </subcellularLocation>
</comment>
<comment type="domain">
    <text evidence="1">The 2 circularly premutated PDZ domains act to negatively regulate protease action on intact RseA.</text>
</comment>
<comment type="miscellaneous">
    <text evidence="1">Regulated intramembrane proteolysis (RIP) occurs when an extracytoplasmic signal triggers a concerted proteolytic cascade to transmit information and elicit cellular responses. A membrane-spanning regulatory substrate protein is first cut extracytoplasmically (site-1 protease, S1P), then within the membrane itself (site-2 protease, S2P, this enzyme), while cytoplasmic proteases finish degrading the regulatory protein, liberating the effector protein (By similarity).</text>
</comment>
<comment type="similarity">
    <text evidence="5">Belongs to the peptidase M50B family.</text>
</comment>
<protein>
    <recommendedName>
        <fullName>Regulator of sigma E protease</fullName>
        <ecNumber>3.4.24.-</ecNumber>
    </recommendedName>
    <alternativeName>
        <fullName>S2P endopeptidase</fullName>
    </alternativeName>
    <alternativeName>
        <fullName>Site-2 protease RseP</fullName>
        <shortName>S2P protease RseP</shortName>
    </alternativeName>
    <alternativeName>
        <fullName>Site-2-type intramembrane protease</fullName>
    </alternativeName>
</protein>
<name>RSEP_SALTI</name>
<keyword id="KW-0997">Cell inner membrane</keyword>
<keyword id="KW-1003">Cell membrane</keyword>
<keyword id="KW-0378">Hydrolase</keyword>
<keyword id="KW-0472">Membrane</keyword>
<keyword id="KW-0479">Metal-binding</keyword>
<keyword id="KW-0482">Metalloprotease</keyword>
<keyword id="KW-0645">Protease</keyword>
<keyword id="KW-0677">Repeat</keyword>
<keyword id="KW-0812">Transmembrane</keyword>
<keyword id="KW-1133">Transmembrane helix</keyword>
<keyword id="KW-0862">Zinc</keyword>
<accession>Q8Z9A4</accession>
<sequence>MLSILWNLAAFIIALGVLITVHEFGHFWVARRCGVRVERFSIGFGKALWRRTDRYGTEYVIALIPLGGYVKMLDERAEPVAPELRRHAFNNKTVGQRAAIIAAGPVANFIFAIFAYWLVFIIGVPGVRPVIGEITPNSIAAQAQIAPGTELKAVDGIETPDWDAVRLQLVSKIGDQQTTVSVAPFGSDQRQDKTLDLRHWAFEPDKQDPVSSLGIRPRGPQIEPVLSEVQANSAASKAGLQAGDRIVKVDGQPLTQWMKFVTFVRDNPGKPLALEIERQGSALSLTLTPDTKSVNGKAEGFAGVVPKIIPLPEEYKTIRQYGPFSAILEATDKTWQLMKLTVNMLGKLITGDVKLNNLSGPISIAQGAGMSAEFGVIYYLMFLALISVNLGIINLFPLPVLDGGHLLFLAIEKLKGGPVSERVQDFSYRIGSILLVLLMGLALFNDFSRL</sequence>
<feature type="chain" id="PRO_0000088420" description="Regulator of sigma E protease">
    <location>
        <begin position="1"/>
        <end position="450"/>
    </location>
</feature>
<feature type="transmembrane region" description="Helical" evidence="2">
    <location>
        <begin position="98"/>
        <end position="120"/>
    </location>
</feature>
<feature type="transmembrane region" description="Helical" evidence="2">
    <location>
        <begin position="376"/>
        <end position="398"/>
    </location>
</feature>
<feature type="transmembrane region" description="Helical" evidence="2">
    <location>
        <begin position="426"/>
        <end position="445"/>
    </location>
</feature>
<feature type="domain" description="PDZ 1" evidence="3">
    <location>
        <begin position="115"/>
        <end position="186"/>
    </location>
</feature>
<feature type="domain" description="PDZ 2" evidence="3">
    <location>
        <begin position="199"/>
        <end position="291"/>
    </location>
</feature>
<feature type="active site" evidence="4">
    <location>
        <position position="23"/>
    </location>
</feature>
<feature type="binding site" evidence="4">
    <location>
        <position position="22"/>
    </location>
    <ligand>
        <name>Zn(2+)</name>
        <dbReference type="ChEBI" id="CHEBI:29105"/>
        <note>catalytic</note>
    </ligand>
</feature>
<feature type="binding site" evidence="4">
    <location>
        <position position="26"/>
    </location>
    <ligand>
        <name>Zn(2+)</name>
        <dbReference type="ChEBI" id="CHEBI:29105"/>
        <note>catalytic</note>
    </ligand>
</feature>
<reference key="1">
    <citation type="journal article" date="2001" name="Nature">
        <title>Complete genome sequence of a multiple drug resistant Salmonella enterica serovar Typhi CT18.</title>
        <authorList>
            <person name="Parkhill J."/>
            <person name="Dougan G."/>
            <person name="James K.D."/>
            <person name="Thomson N.R."/>
            <person name="Pickard D."/>
            <person name="Wain J."/>
            <person name="Churcher C.M."/>
            <person name="Mungall K.L."/>
            <person name="Bentley S.D."/>
            <person name="Holden M.T.G."/>
            <person name="Sebaihia M."/>
            <person name="Baker S."/>
            <person name="Basham D."/>
            <person name="Brooks K."/>
            <person name="Chillingworth T."/>
            <person name="Connerton P."/>
            <person name="Cronin A."/>
            <person name="Davis P."/>
            <person name="Davies R.M."/>
            <person name="Dowd L."/>
            <person name="White N."/>
            <person name="Farrar J."/>
            <person name="Feltwell T."/>
            <person name="Hamlin N."/>
            <person name="Haque A."/>
            <person name="Hien T.T."/>
            <person name="Holroyd S."/>
            <person name="Jagels K."/>
            <person name="Krogh A."/>
            <person name="Larsen T.S."/>
            <person name="Leather S."/>
            <person name="Moule S."/>
            <person name="O'Gaora P."/>
            <person name="Parry C."/>
            <person name="Quail M.A."/>
            <person name="Rutherford K.M."/>
            <person name="Simmonds M."/>
            <person name="Skelton J."/>
            <person name="Stevens K."/>
            <person name="Whitehead S."/>
            <person name="Barrell B.G."/>
        </authorList>
    </citation>
    <scope>NUCLEOTIDE SEQUENCE [LARGE SCALE GENOMIC DNA]</scope>
    <source>
        <strain>CT18</strain>
    </source>
</reference>
<reference key="2">
    <citation type="journal article" date="2003" name="J. Bacteriol.">
        <title>Comparative genomics of Salmonella enterica serovar Typhi strains Ty2 and CT18.</title>
        <authorList>
            <person name="Deng W."/>
            <person name="Liou S.-R."/>
            <person name="Plunkett G. III"/>
            <person name="Mayhew G.F."/>
            <person name="Rose D.J."/>
            <person name="Burland V."/>
            <person name="Kodoyianni V."/>
            <person name="Schwartz D.C."/>
            <person name="Blattner F.R."/>
        </authorList>
    </citation>
    <scope>NUCLEOTIDE SEQUENCE [LARGE SCALE GENOMIC DNA]</scope>
    <source>
        <strain>ATCC 700931 / Ty2</strain>
    </source>
</reference>
<gene>
    <name type="primary">rseP</name>
    <name type="ordered locus">STY0246</name>
    <name type="ordered locus">t0224</name>
</gene>
<proteinExistence type="inferred from homology"/>
<organism>
    <name type="scientific">Salmonella typhi</name>
    <dbReference type="NCBI Taxonomy" id="90370"/>
    <lineage>
        <taxon>Bacteria</taxon>
        <taxon>Pseudomonadati</taxon>
        <taxon>Pseudomonadota</taxon>
        <taxon>Gammaproteobacteria</taxon>
        <taxon>Enterobacterales</taxon>
        <taxon>Enterobacteriaceae</taxon>
        <taxon>Salmonella</taxon>
    </lineage>
</organism>
<evidence type="ECO:0000250" key="1"/>
<evidence type="ECO:0000255" key="2"/>
<evidence type="ECO:0000255" key="3">
    <source>
        <dbReference type="PROSITE-ProRule" id="PRU00143"/>
    </source>
</evidence>
<evidence type="ECO:0000255" key="4">
    <source>
        <dbReference type="PROSITE-ProRule" id="PRU10095"/>
    </source>
</evidence>
<evidence type="ECO:0000305" key="5"/>
<dbReference type="EC" id="3.4.24.-"/>
<dbReference type="EMBL" id="AL513382">
    <property type="protein sequence ID" value="CAD08681.1"/>
    <property type="molecule type" value="Genomic_DNA"/>
</dbReference>
<dbReference type="EMBL" id="AE014613">
    <property type="protein sequence ID" value="AAO67954.1"/>
    <property type="molecule type" value="Genomic_DNA"/>
</dbReference>
<dbReference type="RefSeq" id="NP_454830.1">
    <property type="nucleotide sequence ID" value="NC_003198.1"/>
</dbReference>
<dbReference type="RefSeq" id="WP_000949016.1">
    <property type="nucleotide sequence ID" value="NZ_WSUR01000009.1"/>
</dbReference>
<dbReference type="SMR" id="Q8Z9A4"/>
<dbReference type="STRING" id="220341.gene:17584279"/>
<dbReference type="MEROPS" id="M50.004"/>
<dbReference type="KEGG" id="stt:t0224"/>
<dbReference type="KEGG" id="sty:STY0246"/>
<dbReference type="PATRIC" id="fig|220341.7.peg.246"/>
<dbReference type="eggNOG" id="COG0750">
    <property type="taxonomic scope" value="Bacteria"/>
</dbReference>
<dbReference type="HOGENOM" id="CLU_025778_0_2_6"/>
<dbReference type="OMA" id="EYGHFWA"/>
<dbReference type="OrthoDB" id="9782003at2"/>
<dbReference type="Proteomes" id="UP000000541">
    <property type="component" value="Chromosome"/>
</dbReference>
<dbReference type="Proteomes" id="UP000002670">
    <property type="component" value="Chromosome"/>
</dbReference>
<dbReference type="GO" id="GO:0005886">
    <property type="term" value="C:plasma membrane"/>
    <property type="evidence" value="ECO:0007669"/>
    <property type="project" value="UniProtKB-SubCell"/>
</dbReference>
<dbReference type="GO" id="GO:0046872">
    <property type="term" value="F:metal ion binding"/>
    <property type="evidence" value="ECO:0007669"/>
    <property type="project" value="UniProtKB-KW"/>
</dbReference>
<dbReference type="GO" id="GO:0004222">
    <property type="term" value="F:metalloendopeptidase activity"/>
    <property type="evidence" value="ECO:0007669"/>
    <property type="project" value="InterPro"/>
</dbReference>
<dbReference type="GO" id="GO:0006508">
    <property type="term" value="P:proteolysis"/>
    <property type="evidence" value="ECO:0007669"/>
    <property type="project" value="UniProtKB-KW"/>
</dbReference>
<dbReference type="CDD" id="cd23082">
    <property type="entry name" value="cpPDZ1_EcRseP-like"/>
    <property type="match status" value="1"/>
</dbReference>
<dbReference type="CDD" id="cd23083">
    <property type="entry name" value="cpPDZ2_EcRseP-like"/>
    <property type="match status" value="1"/>
</dbReference>
<dbReference type="CDD" id="cd06163">
    <property type="entry name" value="S2P-M50_PDZ_RseP-like"/>
    <property type="match status" value="1"/>
</dbReference>
<dbReference type="FunFam" id="2.30.42.10:FF:000094">
    <property type="entry name" value="Zinc metalloprotease"/>
    <property type="match status" value="1"/>
</dbReference>
<dbReference type="FunFam" id="2.30.42.10:FF:000095">
    <property type="entry name" value="Zinc metalloprotease"/>
    <property type="match status" value="1"/>
</dbReference>
<dbReference type="Gene3D" id="2.30.42.10">
    <property type="match status" value="2"/>
</dbReference>
<dbReference type="InterPro" id="IPR001478">
    <property type="entry name" value="PDZ"/>
</dbReference>
<dbReference type="InterPro" id="IPR041489">
    <property type="entry name" value="PDZ_6"/>
</dbReference>
<dbReference type="InterPro" id="IPR036034">
    <property type="entry name" value="PDZ_sf"/>
</dbReference>
<dbReference type="InterPro" id="IPR004387">
    <property type="entry name" value="Pept_M50_Zn"/>
</dbReference>
<dbReference type="InterPro" id="IPR008915">
    <property type="entry name" value="Peptidase_M50"/>
</dbReference>
<dbReference type="NCBIfam" id="NF008046">
    <property type="entry name" value="PRK10779.1"/>
    <property type="match status" value="1"/>
</dbReference>
<dbReference type="NCBIfam" id="TIGR00054">
    <property type="entry name" value="RIP metalloprotease RseP"/>
    <property type="match status" value="1"/>
</dbReference>
<dbReference type="PANTHER" id="PTHR42837:SF2">
    <property type="entry name" value="MEMBRANE METALLOPROTEASE ARASP2, CHLOROPLASTIC-RELATED"/>
    <property type="match status" value="1"/>
</dbReference>
<dbReference type="PANTHER" id="PTHR42837">
    <property type="entry name" value="REGULATOR OF SIGMA-E PROTEASE RSEP"/>
    <property type="match status" value="1"/>
</dbReference>
<dbReference type="Pfam" id="PF17820">
    <property type="entry name" value="PDZ_6"/>
    <property type="match status" value="1"/>
</dbReference>
<dbReference type="Pfam" id="PF02163">
    <property type="entry name" value="Peptidase_M50"/>
    <property type="match status" value="1"/>
</dbReference>
<dbReference type="SMART" id="SM00228">
    <property type="entry name" value="PDZ"/>
    <property type="match status" value="2"/>
</dbReference>
<dbReference type="SUPFAM" id="SSF50156">
    <property type="entry name" value="PDZ domain-like"/>
    <property type="match status" value="2"/>
</dbReference>
<dbReference type="PROSITE" id="PS50106">
    <property type="entry name" value="PDZ"/>
    <property type="match status" value="1"/>
</dbReference>
<dbReference type="PROSITE" id="PS00142">
    <property type="entry name" value="ZINC_PROTEASE"/>
    <property type="match status" value="1"/>
</dbReference>